<sequence>MTGMAKPLALTLGEPAGIGPDIALAAWLKREQHGLPPFYLLGDAGCLSRCAKLLGLDVPLAEVKAEDAAAAFATTLPVVSTGQIATATPGQPDATSAPAAIASIEHAVADVRSGRAAAVVTNPIAKSVLYQAGFHHPGHTEFLAELAKRDGIVPQPVMMLWCPALAVVPVTIHVSLRDAITQLTTDLIVSTARIVVKDLRERLGIAQPRLALAGLNPHAGEDGALGQEDRAVVAPAVAILRREGVDARGPLPADTMFHAAARKTYDCAICMYHDQALIPIKTIAFDEGVNVTLGLPFIRTSPDHGTAFDIAGSGQANPSSLIAALKLAAQMASAKTA</sequence>
<gene>
    <name evidence="1" type="primary">pdxA</name>
    <name type="ordered locus">Rpal_3475</name>
</gene>
<name>PDXA_RHOPT</name>
<evidence type="ECO:0000255" key="1">
    <source>
        <dbReference type="HAMAP-Rule" id="MF_00536"/>
    </source>
</evidence>
<organism>
    <name type="scientific">Rhodopseudomonas palustris (strain TIE-1)</name>
    <dbReference type="NCBI Taxonomy" id="395960"/>
    <lineage>
        <taxon>Bacteria</taxon>
        <taxon>Pseudomonadati</taxon>
        <taxon>Pseudomonadota</taxon>
        <taxon>Alphaproteobacteria</taxon>
        <taxon>Hyphomicrobiales</taxon>
        <taxon>Nitrobacteraceae</taxon>
        <taxon>Rhodopseudomonas</taxon>
    </lineage>
</organism>
<reference key="1">
    <citation type="submission" date="2008-05" db="EMBL/GenBank/DDBJ databases">
        <title>Complete sequence of Rhodopseudomonas palustris TIE-1.</title>
        <authorList>
            <consortium name="US DOE Joint Genome Institute"/>
            <person name="Lucas S."/>
            <person name="Copeland A."/>
            <person name="Lapidus A."/>
            <person name="Glavina del Rio T."/>
            <person name="Dalin E."/>
            <person name="Tice H."/>
            <person name="Pitluck S."/>
            <person name="Chain P."/>
            <person name="Malfatti S."/>
            <person name="Shin M."/>
            <person name="Vergez L."/>
            <person name="Lang D."/>
            <person name="Schmutz J."/>
            <person name="Larimer F."/>
            <person name="Land M."/>
            <person name="Hauser L."/>
            <person name="Kyrpides N."/>
            <person name="Mikhailova N."/>
            <person name="Emerson D."/>
            <person name="Newman D.K."/>
            <person name="Roden E."/>
            <person name="Richardson P."/>
        </authorList>
    </citation>
    <scope>NUCLEOTIDE SEQUENCE [LARGE SCALE GENOMIC DNA]</scope>
    <source>
        <strain>TIE-1</strain>
    </source>
</reference>
<keyword id="KW-0170">Cobalt</keyword>
<keyword id="KW-0963">Cytoplasm</keyword>
<keyword id="KW-0460">Magnesium</keyword>
<keyword id="KW-0479">Metal-binding</keyword>
<keyword id="KW-0520">NAD</keyword>
<keyword id="KW-0521">NADP</keyword>
<keyword id="KW-0560">Oxidoreductase</keyword>
<keyword id="KW-0664">Pyridoxine biosynthesis</keyword>
<keyword id="KW-0862">Zinc</keyword>
<comment type="function">
    <text evidence="1">Catalyzes the NAD(P)-dependent oxidation of 4-(phosphooxy)-L-threonine (HTP) into 2-amino-3-oxo-4-(phosphooxy)butyric acid which spontaneously decarboxylates to form 3-amino-2-oxopropyl phosphate (AHAP).</text>
</comment>
<comment type="catalytic activity">
    <reaction evidence="1">
        <text>4-(phosphooxy)-L-threonine + NAD(+) = 3-amino-2-oxopropyl phosphate + CO2 + NADH</text>
        <dbReference type="Rhea" id="RHEA:32275"/>
        <dbReference type="ChEBI" id="CHEBI:16526"/>
        <dbReference type="ChEBI" id="CHEBI:57279"/>
        <dbReference type="ChEBI" id="CHEBI:57540"/>
        <dbReference type="ChEBI" id="CHEBI:57945"/>
        <dbReference type="ChEBI" id="CHEBI:58452"/>
        <dbReference type="EC" id="1.1.1.262"/>
    </reaction>
</comment>
<comment type="cofactor">
    <cofactor evidence="1">
        <name>Zn(2+)</name>
        <dbReference type="ChEBI" id="CHEBI:29105"/>
    </cofactor>
    <cofactor evidence="1">
        <name>Mg(2+)</name>
        <dbReference type="ChEBI" id="CHEBI:18420"/>
    </cofactor>
    <cofactor evidence="1">
        <name>Co(2+)</name>
        <dbReference type="ChEBI" id="CHEBI:48828"/>
    </cofactor>
    <text evidence="1">Binds 1 divalent metal cation per subunit. Can use ions such as Zn(2+), Mg(2+) or Co(2+).</text>
</comment>
<comment type="pathway">
    <text evidence="1">Cofactor biosynthesis; pyridoxine 5'-phosphate biosynthesis; pyridoxine 5'-phosphate from D-erythrose 4-phosphate: step 4/5.</text>
</comment>
<comment type="subunit">
    <text evidence="1">Homodimer.</text>
</comment>
<comment type="subcellular location">
    <subcellularLocation>
        <location evidence="1">Cytoplasm</location>
    </subcellularLocation>
</comment>
<comment type="miscellaneous">
    <text evidence="1">The active site is located at the dimer interface.</text>
</comment>
<comment type="similarity">
    <text evidence="1">Belongs to the PdxA family.</text>
</comment>
<proteinExistence type="inferred from homology"/>
<accession>B3Q9S3</accession>
<protein>
    <recommendedName>
        <fullName evidence="1">4-hydroxythreonine-4-phosphate dehydrogenase</fullName>
        <ecNumber evidence="1">1.1.1.262</ecNumber>
    </recommendedName>
    <alternativeName>
        <fullName evidence="1">4-(phosphohydroxy)-L-threonine dehydrogenase</fullName>
    </alternativeName>
</protein>
<dbReference type="EC" id="1.1.1.262" evidence="1"/>
<dbReference type="EMBL" id="CP001096">
    <property type="protein sequence ID" value="ACF01976.1"/>
    <property type="molecule type" value="Genomic_DNA"/>
</dbReference>
<dbReference type="RefSeq" id="WP_011158611.1">
    <property type="nucleotide sequence ID" value="NC_011004.1"/>
</dbReference>
<dbReference type="SMR" id="B3Q9S3"/>
<dbReference type="GeneID" id="66894147"/>
<dbReference type="KEGG" id="rpt:Rpal_3475"/>
<dbReference type="HOGENOM" id="CLU_040168_1_0_5"/>
<dbReference type="OrthoDB" id="9801783at2"/>
<dbReference type="UniPathway" id="UPA00244">
    <property type="reaction ID" value="UER00312"/>
</dbReference>
<dbReference type="Proteomes" id="UP000001725">
    <property type="component" value="Chromosome"/>
</dbReference>
<dbReference type="GO" id="GO:0005737">
    <property type="term" value="C:cytoplasm"/>
    <property type="evidence" value="ECO:0007669"/>
    <property type="project" value="UniProtKB-SubCell"/>
</dbReference>
<dbReference type="GO" id="GO:0050570">
    <property type="term" value="F:4-hydroxythreonine-4-phosphate dehydrogenase activity"/>
    <property type="evidence" value="ECO:0007669"/>
    <property type="project" value="UniProtKB-UniRule"/>
</dbReference>
<dbReference type="GO" id="GO:0050897">
    <property type="term" value="F:cobalt ion binding"/>
    <property type="evidence" value="ECO:0007669"/>
    <property type="project" value="UniProtKB-UniRule"/>
</dbReference>
<dbReference type="GO" id="GO:0000287">
    <property type="term" value="F:magnesium ion binding"/>
    <property type="evidence" value="ECO:0007669"/>
    <property type="project" value="UniProtKB-UniRule"/>
</dbReference>
<dbReference type="GO" id="GO:0051287">
    <property type="term" value="F:NAD binding"/>
    <property type="evidence" value="ECO:0007669"/>
    <property type="project" value="InterPro"/>
</dbReference>
<dbReference type="GO" id="GO:0008270">
    <property type="term" value="F:zinc ion binding"/>
    <property type="evidence" value="ECO:0007669"/>
    <property type="project" value="UniProtKB-UniRule"/>
</dbReference>
<dbReference type="GO" id="GO:0042823">
    <property type="term" value="P:pyridoxal phosphate biosynthetic process"/>
    <property type="evidence" value="ECO:0007669"/>
    <property type="project" value="UniProtKB-UniRule"/>
</dbReference>
<dbReference type="GO" id="GO:0008615">
    <property type="term" value="P:pyridoxine biosynthetic process"/>
    <property type="evidence" value="ECO:0007669"/>
    <property type="project" value="UniProtKB-UniRule"/>
</dbReference>
<dbReference type="Gene3D" id="3.40.718.10">
    <property type="entry name" value="Isopropylmalate Dehydrogenase"/>
    <property type="match status" value="1"/>
</dbReference>
<dbReference type="HAMAP" id="MF_00536">
    <property type="entry name" value="PdxA"/>
    <property type="match status" value="1"/>
</dbReference>
<dbReference type="InterPro" id="IPR037510">
    <property type="entry name" value="PdxA"/>
</dbReference>
<dbReference type="InterPro" id="IPR005255">
    <property type="entry name" value="PdxA_fam"/>
</dbReference>
<dbReference type="NCBIfam" id="TIGR00557">
    <property type="entry name" value="pdxA"/>
    <property type="match status" value="1"/>
</dbReference>
<dbReference type="NCBIfam" id="NF003699">
    <property type="entry name" value="PRK05312.1"/>
    <property type="match status" value="1"/>
</dbReference>
<dbReference type="PANTHER" id="PTHR30004">
    <property type="entry name" value="4-HYDROXYTHREONINE-4-PHOSPHATE DEHYDROGENASE"/>
    <property type="match status" value="1"/>
</dbReference>
<dbReference type="PANTHER" id="PTHR30004:SF6">
    <property type="entry name" value="D-THREONATE 4-PHOSPHATE DEHYDROGENASE"/>
    <property type="match status" value="1"/>
</dbReference>
<dbReference type="Pfam" id="PF04166">
    <property type="entry name" value="PdxA"/>
    <property type="match status" value="1"/>
</dbReference>
<dbReference type="SUPFAM" id="SSF53659">
    <property type="entry name" value="Isocitrate/Isopropylmalate dehydrogenase-like"/>
    <property type="match status" value="1"/>
</dbReference>
<feature type="chain" id="PRO_1000128259" description="4-hydroxythreonine-4-phosphate dehydrogenase">
    <location>
        <begin position="1"/>
        <end position="337"/>
    </location>
</feature>
<feature type="binding site" evidence="1">
    <location>
        <position position="139"/>
    </location>
    <ligand>
        <name>substrate</name>
    </ligand>
</feature>
<feature type="binding site" evidence="1">
    <location>
        <position position="140"/>
    </location>
    <ligand>
        <name>substrate</name>
    </ligand>
</feature>
<feature type="binding site" evidence="1">
    <location>
        <position position="173"/>
    </location>
    <ligand>
        <name>a divalent metal cation</name>
        <dbReference type="ChEBI" id="CHEBI:60240"/>
        <note>ligand shared between dimeric partners</note>
    </ligand>
</feature>
<feature type="binding site" evidence="1">
    <location>
        <position position="218"/>
    </location>
    <ligand>
        <name>a divalent metal cation</name>
        <dbReference type="ChEBI" id="CHEBI:60240"/>
        <note>ligand shared between dimeric partners</note>
    </ligand>
</feature>
<feature type="binding site" evidence="1">
    <location>
        <position position="273"/>
    </location>
    <ligand>
        <name>a divalent metal cation</name>
        <dbReference type="ChEBI" id="CHEBI:60240"/>
        <note>ligand shared between dimeric partners</note>
    </ligand>
</feature>
<feature type="binding site" evidence="1">
    <location>
        <position position="281"/>
    </location>
    <ligand>
        <name>substrate</name>
    </ligand>
</feature>
<feature type="binding site" evidence="1">
    <location>
        <position position="290"/>
    </location>
    <ligand>
        <name>substrate</name>
    </ligand>
</feature>
<feature type="binding site" evidence="1">
    <location>
        <position position="299"/>
    </location>
    <ligand>
        <name>substrate</name>
    </ligand>
</feature>